<sequence length="159" mass="18427">MRCPFCRHDDTQVVDSRVSEDGAAIRRRRRCSACDKRFTTYERVELALPAVVKKDGSRTEFDRRKIVASMQLALRKRPVAADAIDAAVARIEYQLLASGEREVRSEKLGELVMNELRQLDTIAYVRFASVYRRFEDVSEFEDVIEEFRRAAPAKTPRKR</sequence>
<evidence type="ECO:0000255" key="1">
    <source>
        <dbReference type="HAMAP-Rule" id="MF_00440"/>
    </source>
</evidence>
<proteinExistence type="inferred from homology"/>
<dbReference type="EMBL" id="CP000526">
    <property type="protein sequence ID" value="ABM51587.1"/>
    <property type="molecule type" value="Genomic_DNA"/>
</dbReference>
<dbReference type="RefSeq" id="WP_004185666.1">
    <property type="nucleotide sequence ID" value="NC_008785.1"/>
</dbReference>
<dbReference type="SMR" id="A1V1S2"/>
<dbReference type="GeneID" id="93061344"/>
<dbReference type="KEGG" id="bmv:BMASAVP1_A0835"/>
<dbReference type="HOGENOM" id="CLU_108412_0_0_4"/>
<dbReference type="GO" id="GO:0005524">
    <property type="term" value="F:ATP binding"/>
    <property type="evidence" value="ECO:0007669"/>
    <property type="project" value="UniProtKB-KW"/>
</dbReference>
<dbReference type="GO" id="GO:0003677">
    <property type="term" value="F:DNA binding"/>
    <property type="evidence" value="ECO:0007669"/>
    <property type="project" value="UniProtKB-KW"/>
</dbReference>
<dbReference type="GO" id="GO:0008270">
    <property type="term" value="F:zinc ion binding"/>
    <property type="evidence" value="ECO:0007669"/>
    <property type="project" value="UniProtKB-UniRule"/>
</dbReference>
<dbReference type="GO" id="GO:0045892">
    <property type="term" value="P:negative regulation of DNA-templated transcription"/>
    <property type="evidence" value="ECO:0007669"/>
    <property type="project" value="UniProtKB-UniRule"/>
</dbReference>
<dbReference type="HAMAP" id="MF_00440">
    <property type="entry name" value="NrdR"/>
    <property type="match status" value="1"/>
</dbReference>
<dbReference type="InterPro" id="IPR005144">
    <property type="entry name" value="ATP-cone_dom"/>
</dbReference>
<dbReference type="InterPro" id="IPR055173">
    <property type="entry name" value="NrdR-like_N"/>
</dbReference>
<dbReference type="InterPro" id="IPR003796">
    <property type="entry name" value="RNR_NrdR-like"/>
</dbReference>
<dbReference type="NCBIfam" id="TIGR00244">
    <property type="entry name" value="transcriptional regulator NrdR"/>
    <property type="match status" value="1"/>
</dbReference>
<dbReference type="PANTHER" id="PTHR30455">
    <property type="entry name" value="TRANSCRIPTIONAL REPRESSOR NRDR"/>
    <property type="match status" value="1"/>
</dbReference>
<dbReference type="PANTHER" id="PTHR30455:SF2">
    <property type="entry name" value="TRANSCRIPTIONAL REPRESSOR NRDR"/>
    <property type="match status" value="1"/>
</dbReference>
<dbReference type="Pfam" id="PF03477">
    <property type="entry name" value="ATP-cone"/>
    <property type="match status" value="1"/>
</dbReference>
<dbReference type="Pfam" id="PF22811">
    <property type="entry name" value="Zn_ribbon_NrdR"/>
    <property type="match status" value="1"/>
</dbReference>
<dbReference type="PROSITE" id="PS51161">
    <property type="entry name" value="ATP_CONE"/>
    <property type="match status" value="1"/>
</dbReference>
<name>NRDR_BURMS</name>
<comment type="function">
    <text evidence="1">Negatively regulates transcription of bacterial ribonucleotide reductase nrd genes and operons by binding to NrdR-boxes.</text>
</comment>
<comment type="cofactor">
    <cofactor evidence="1">
        <name>Zn(2+)</name>
        <dbReference type="ChEBI" id="CHEBI:29105"/>
    </cofactor>
    <text evidence="1">Binds 1 zinc ion.</text>
</comment>
<comment type="similarity">
    <text evidence="1">Belongs to the NrdR family.</text>
</comment>
<feature type="chain" id="PRO_1000080724" description="Transcriptional repressor NrdR">
    <location>
        <begin position="1"/>
        <end position="159"/>
    </location>
</feature>
<feature type="domain" description="ATP-cone" evidence="1">
    <location>
        <begin position="49"/>
        <end position="139"/>
    </location>
</feature>
<feature type="zinc finger region" evidence="1">
    <location>
        <begin position="3"/>
        <end position="34"/>
    </location>
</feature>
<accession>A1V1S2</accession>
<gene>
    <name evidence="1" type="primary">nrdR</name>
    <name type="ordered locus">BMASAVP1_A0835</name>
</gene>
<keyword id="KW-0067">ATP-binding</keyword>
<keyword id="KW-0238">DNA-binding</keyword>
<keyword id="KW-0479">Metal-binding</keyword>
<keyword id="KW-0547">Nucleotide-binding</keyword>
<keyword id="KW-0678">Repressor</keyword>
<keyword id="KW-0804">Transcription</keyword>
<keyword id="KW-0805">Transcription regulation</keyword>
<keyword id="KW-0862">Zinc</keyword>
<keyword id="KW-0863">Zinc-finger</keyword>
<organism>
    <name type="scientific">Burkholderia mallei (strain SAVP1)</name>
    <dbReference type="NCBI Taxonomy" id="320388"/>
    <lineage>
        <taxon>Bacteria</taxon>
        <taxon>Pseudomonadati</taxon>
        <taxon>Pseudomonadota</taxon>
        <taxon>Betaproteobacteria</taxon>
        <taxon>Burkholderiales</taxon>
        <taxon>Burkholderiaceae</taxon>
        <taxon>Burkholderia</taxon>
        <taxon>pseudomallei group</taxon>
    </lineage>
</organism>
<reference key="1">
    <citation type="journal article" date="2010" name="Genome Biol. Evol.">
        <title>Continuing evolution of Burkholderia mallei through genome reduction and large-scale rearrangements.</title>
        <authorList>
            <person name="Losada L."/>
            <person name="Ronning C.M."/>
            <person name="DeShazer D."/>
            <person name="Woods D."/>
            <person name="Fedorova N."/>
            <person name="Kim H.S."/>
            <person name="Shabalina S.A."/>
            <person name="Pearson T.R."/>
            <person name="Brinkac L."/>
            <person name="Tan P."/>
            <person name="Nandi T."/>
            <person name="Crabtree J."/>
            <person name="Badger J."/>
            <person name="Beckstrom-Sternberg S."/>
            <person name="Saqib M."/>
            <person name="Schutzer S.E."/>
            <person name="Keim P."/>
            <person name="Nierman W.C."/>
        </authorList>
    </citation>
    <scope>NUCLEOTIDE SEQUENCE [LARGE SCALE GENOMIC DNA]</scope>
    <source>
        <strain>SAVP1</strain>
    </source>
</reference>
<protein>
    <recommendedName>
        <fullName evidence="1">Transcriptional repressor NrdR</fullName>
    </recommendedName>
</protein>